<sequence length="377" mass="39224">MNTPSQAQVRRAIAEAQTIVVKVGSSSLTEPSGHLDPQRLNALVAAIARVRLMGGRVVLVSSGAIAAGFGTLGFDKRPTDVADQQACAAVGQGLLMAQYEAAFARYGLRVGQILITVSDTIAPQQYRNVRRTLDRLLDLGAVPIINENDSLASNEIRFGDNDRLSALIANIVVADALVLLTDVDALYTAPPSEPGSKRISYVPNVEDALAKVQVGGTGSNVGTGGMVTKMEAARVAAVSGIPAVLTCASNAGPAMMGDPVGTAFAPINDRGSSRRLWIGFASHPQGTLVADSGAAKAVRGGAASLLAAGVVEVKGDFAAGDAVWVDDEQGNHLAKGLVGFDSEEIPQMLGRNTAQLKRFLGEEYAHPLVHRDNLVLV</sequence>
<dbReference type="EC" id="2.7.2.11" evidence="1"/>
<dbReference type="EMBL" id="AP009256">
    <property type="protein sequence ID" value="BAF39024.1"/>
    <property type="molecule type" value="Genomic_DNA"/>
</dbReference>
<dbReference type="RefSeq" id="WP_003807760.1">
    <property type="nucleotide sequence ID" value="NZ_CAXVNC010000001.1"/>
</dbReference>
<dbReference type="SMR" id="A0ZZZ1"/>
<dbReference type="STRING" id="367928.BAD_0243"/>
<dbReference type="PaxDb" id="1680-BADO_0252"/>
<dbReference type="GeneID" id="4556587"/>
<dbReference type="KEGG" id="bad:BAD_0243"/>
<dbReference type="HOGENOM" id="CLU_025400_2_0_11"/>
<dbReference type="UniPathway" id="UPA00098">
    <property type="reaction ID" value="UER00359"/>
</dbReference>
<dbReference type="Proteomes" id="UP000008702">
    <property type="component" value="Chromosome"/>
</dbReference>
<dbReference type="GO" id="GO:0005829">
    <property type="term" value="C:cytosol"/>
    <property type="evidence" value="ECO:0007669"/>
    <property type="project" value="TreeGrafter"/>
</dbReference>
<dbReference type="GO" id="GO:0005524">
    <property type="term" value="F:ATP binding"/>
    <property type="evidence" value="ECO:0007669"/>
    <property type="project" value="UniProtKB-KW"/>
</dbReference>
<dbReference type="GO" id="GO:0004349">
    <property type="term" value="F:glutamate 5-kinase activity"/>
    <property type="evidence" value="ECO:0007669"/>
    <property type="project" value="UniProtKB-UniRule"/>
</dbReference>
<dbReference type="GO" id="GO:0003723">
    <property type="term" value="F:RNA binding"/>
    <property type="evidence" value="ECO:0007669"/>
    <property type="project" value="InterPro"/>
</dbReference>
<dbReference type="GO" id="GO:0055129">
    <property type="term" value="P:L-proline biosynthetic process"/>
    <property type="evidence" value="ECO:0007669"/>
    <property type="project" value="UniProtKB-UniRule"/>
</dbReference>
<dbReference type="CDD" id="cd04242">
    <property type="entry name" value="AAK_G5K_ProB"/>
    <property type="match status" value="1"/>
</dbReference>
<dbReference type="CDD" id="cd21157">
    <property type="entry name" value="PUA_G5K"/>
    <property type="match status" value="1"/>
</dbReference>
<dbReference type="FunFam" id="3.40.1160.10:FF:000018">
    <property type="entry name" value="Glutamate 5-kinase"/>
    <property type="match status" value="1"/>
</dbReference>
<dbReference type="Gene3D" id="3.40.1160.10">
    <property type="entry name" value="Acetylglutamate kinase-like"/>
    <property type="match status" value="1"/>
</dbReference>
<dbReference type="Gene3D" id="2.30.130.10">
    <property type="entry name" value="PUA domain"/>
    <property type="match status" value="1"/>
</dbReference>
<dbReference type="HAMAP" id="MF_00456">
    <property type="entry name" value="ProB"/>
    <property type="match status" value="1"/>
</dbReference>
<dbReference type="InterPro" id="IPR036393">
    <property type="entry name" value="AceGlu_kinase-like_sf"/>
</dbReference>
<dbReference type="InterPro" id="IPR001048">
    <property type="entry name" value="Asp/Glu/Uridylate_kinase"/>
</dbReference>
<dbReference type="InterPro" id="IPR041739">
    <property type="entry name" value="G5K_ProB"/>
</dbReference>
<dbReference type="InterPro" id="IPR001057">
    <property type="entry name" value="Glu/AcGlu_kinase"/>
</dbReference>
<dbReference type="InterPro" id="IPR011529">
    <property type="entry name" value="Glu_5kinase"/>
</dbReference>
<dbReference type="InterPro" id="IPR005715">
    <property type="entry name" value="Glu_5kinase/COase_Synthase"/>
</dbReference>
<dbReference type="InterPro" id="IPR019797">
    <property type="entry name" value="Glutamate_5-kinase_CS"/>
</dbReference>
<dbReference type="InterPro" id="IPR002478">
    <property type="entry name" value="PUA"/>
</dbReference>
<dbReference type="InterPro" id="IPR015947">
    <property type="entry name" value="PUA-like_sf"/>
</dbReference>
<dbReference type="InterPro" id="IPR036974">
    <property type="entry name" value="PUA_sf"/>
</dbReference>
<dbReference type="NCBIfam" id="TIGR01027">
    <property type="entry name" value="proB"/>
    <property type="match status" value="1"/>
</dbReference>
<dbReference type="PANTHER" id="PTHR43654">
    <property type="entry name" value="GLUTAMATE 5-KINASE"/>
    <property type="match status" value="1"/>
</dbReference>
<dbReference type="PANTHER" id="PTHR43654:SF1">
    <property type="entry name" value="ISOPENTENYL PHOSPHATE KINASE"/>
    <property type="match status" value="1"/>
</dbReference>
<dbReference type="Pfam" id="PF00696">
    <property type="entry name" value="AA_kinase"/>
    <property type="match status" value="1"/>
</dbReference>
<dbReference type="Pfam" id="PF01472">
    <property type="entry name" value="PUA"/>
    <property type="match status" value="1"/>
</dbReference>
<dbReference type="PIRSF" id="PIRSF000729">
    <property type="entry name" value="GK"/>
    <property type="match status" value="1"/>
</dbReference>
<dbReference type="PRINTS" id="PR00474">
    <property type="entry name" value="GLU5KINASE"/>
</dbReference>
<dbReference type="SMART" id="SM00359">
    <property type="entry name" value="PUA"/>
    <property type="match status" value="1"/>
</dbReference>
<dbReference type="SUPFAM" id="SSF53633">
    <property type="entry name" value="Carbamate kinase-like"/>
    <property type="match status" value="1"/>
</dbReference>
<dbReference type="SUPFAM" id="SSF88697">
    <property type="entry name" value="PUA domain-like"/>
    <property type="match status" value="1"/>
</dbReference>
<dbReference type="PROSITE" id="PS00902">
    <property type="entry name" value="GLUTAMATE_5_KINASE"/>
    <property type="match status" value="1"/>
</dbReference>
<dbReference type="PROSITE" id="PS50890">
    <property type="entry name" value="PUA"/>
    <property type="match status" value="1"/>
</dbReference>
<feature type="chain" id="PRO_1000081036" description="Glutamate 5-kinase">
    <location>
        <begin position="1"/>
        <end position="377"/>
    </location>
</feature>
<feature type="domain" description="PUA" evidence="1">
    <location>
        <begin position="285"/>
        <end position="359"/>
    </location>
</feature>
<feature type="binding site" evidence="1">
    <location>
        <position position="22"/>
    </location>
    <ligand>
        <name>ATP</name>
        <dbReference type="ChEBI" id="CHEBI:30616"/>
    </ligand>
</feature>
<feature type="binding site" evidence="1">
    <location>
        <position position="62"/>
    </location>
    <ligand>
        <name>substrate</name>
    </ligand>
</feature>
<feature type="binding site" evidence="1">
    <location>
        <position position="149"/>
    </location>
    <ligand>
        <name>substrate</name>
    </ligand>
</feature>
<feature type="binding site" evidence="1">
    <location>
        <position position="161"/>
    </location>
    <ligand>
        <name>substrate</name>
    </ligand>
</feature>
<feature type="binding site" evidence="1">
    <location>
        <begin position="181"/>
        <end position="182"/>
    </location>
    <ligand>
        <name>ATP</name>
        <dbReference type="ChEBI" id="CHEBI:30616"/>
    </ligand>
</feature>
<feature type="binding site" evidence="1">
    <location>
        <begin position="223"/>
        <end position="229"/>
    </location>
    <ligand>
        <name>ATP</name>
        <dbReference type="ChEBI" id="CHEBI:30616"/>
    </ligand>
</feature>
<accession>A0ZZZ1</accession>
<keyword id="KW-0028">Amino-acid biosynthesis</keyword>
<keyword id="KW-0067">ATP-binding</keyword>
<keyword id="KW-0963">Cytoplasm</keyword>
<keyword id="KW-0418">Kinase</keyword>
<keyword id="KW-0547">Nucleotide-binding</keyword>
<keyword id="KW-0641">Proline biosynthesis</keyword>
<keyword id="KW-1185">Reference proteome</keyword>
<keyword id="KW-0808">Transferase</keyword>
<evidence type="ECO:0000255" key="1">
    <source>
        <dbReference type="HAMAP-Rule" id="MF_00456"/>
    </source>
</evidence>
<name>PROB_BIFAA</name>
<comment type="function">
    <text evidence="1">Catalyzes the transfer of a phosphate group to glutamate to form L-glutamate 5-phosphate.</text>
</comment>
<comment type="catalytic activity">
    <reaction evidence="1">
        <text>L-glutamate + ATP = L-glutamyl 5-phosphate + ADP</text>
        <dbReference type="Rhea" id="RHEA:14877"/>
        <dbReference type="ChEBI" id="CHEBI:29985"/>
        <dbReference type="ChEBI" id="CHEBI:30616"/>
        <dbReference type="ChEBI" id="CHEBI:58274"/>
        <dbReference type="ChEBI" id="CHEBI:456216"/>
        <dbReference type="EC" id="2.7.2.11"/>
    </reaction>
</comment>
<comment type="pathway">
    <text evidence="1">Amino-acid biosynthesis; L-proline biosynthesis; L-glutamate 5-semialdehyde from L-glutamate: step 1/2.</text>
</comment>
<comment type="subcellular location">
    <subcellularLocation>
        <location evidence="1">Cytoplasm</location>
    </subcellularLocation>
</comment>
<comment type="similarity">
    <text evidence="1">Belongs to the glutamate 5-kinase family.</text>
</comment>
<reference key="1">
    <citation type="submission" date="2006-12" db="EMBL/GenBank/DDBJ databases">
        <title>Bifidobacterium adolescentis complete genome sequence.</title>
        <authorList>
            <person name="Suzuki T."/>
            <person name="Tsuda Y."/>
            <person name="Kanou N."/>
            <person name="Inoue T."/>
            <person name="Kumazaki K."/>
            <person name="Nagano S."/>
            <person name="Hirai S."/>
            <person name="Tanaka K."/>
            <person name="Watanabe K."/>
        </authorList>
    </citation>
    <scope>NUCLEOTIDE SEQUENCE [LARGE SCALE GENOMIC DNA]</scope>
    <source>
        <strain>ATCC 15703 / DSM 20083 / NCTC 11814 / E194a</strain>
    </source>
</reference>
<organism>
    <name type="scientific">Bifidobacterium adolescentis (strain ATCC 15703 / DSM 20083 / NCTC 11814 / E194a)</name>
    <dbReference type="NCBI Taxonomy" id="367928"/>
    <lineage>
        <taxon>Bacteria</taxon>
        <taxon>Bacillati</taxon>
        <taxon>Actinomycetota</taxon>
        <taxon>Actinomycetes</taxon>
        <taxon>Bifidobacteriales</taxon>
        <taxon>Bifidobacteriaceae</taxon>
        <taxon>Bifidobacterium</taxon>
    </lineage>
</organism>
<protein>
    <recommendedName>
        <fullName evidence="1">Glutamate 5-kinase</fullName>
        <ecNumber evidence="1">2.7.2.11</ecNumber>
    </recommendedName>
    <alternativeName>
        <fullName evidence="1">Gamma-glutamyl kinase</fullName>
        <shortName evidence="1">GK</shortName>
    </alternativeName>
</protein>
<proteinExistence type="inferred from homology"/>
<gene>
    <name evidence="1" type="primary">proB</name>
    <name type="ordered locus">BAD_0243</name>
</gene>